<keyword id="KW-0450">Lipoyl</keyword>
<keyword id="KW-1185">Reference proteome</keyword>
<proteinExistence type="inferred from homology"/>
<accession>Q1INT9</accession>
<feature type="chain" id="PRO_0000302339" description="Glycine cleavage system H protein">
    <location>
        <begin position="1"/>
        <end position="126"/>
    </location>
</feature>
<feature type="domain" description="Lipoyl-binding" evidence="2">
    <location>
        <begin position="19"/>
        <end position="100"/>
    </location>
</feature>
<feature type="modified residue" description="N6-lipoyllysine" evidence="1">
    <location>
        <position position="60"/>
    </location>
</feature>
<reference key="1">
    <citation type="journal article" date="2009" name="Appl. Environ. Microbiol.">
        <title>Three genomes from the phylum Acidobacteria provide insight into the lifestyles of these microorganisms in soils.</title>
        <authorList>
            <person name="Ward N.L."/>
            <person name="Challacombe J.F."/>
            <person name="Janssen P.H."/>
            <person name="Henrissat B."/>
            <person name="Coutinho P.M."/>
            <person name="Wu M."/>
            <person name="Xie G."/>
            <person name="Haft D.H."/>
            <person name="Sait M."/>
            <person name="Badger J."/>
            <person name="Barabote R.D."/>
            <person name="Bradley B."/>
            <person name="Brettin T.S."/>
            <person name="Brinkac L.M."/>
            <person name="Bruce D."/>
            <person name="Creasy T."/>
            <person name="Daugherty S.C."/>
            <person name="Davidsen T.M."/>
            <person name="DeBoy R.T."/>
            <person name="Detter J.C."/>
            <person name="Dodson R.J."/>
            <person name="Durkin A.S."/>
            <person name="Ganapathy A."/>
            <person name="Gwinn-Giglio M."/>
            <person name="Han C.S."/>
            <person name="Khouri H."/>
            <person name="Kiss H."/>
            <person name="Kothari S.P."/>
            <person name="Madupu R."/>
            <person name="Nelson K.E."/>
            <person name="Nelson W.C."/>
            <person name="Paulsen I."/>
            <person name="Penn K."/>
            <person name="Ren Q."/>
            <person name="Rosovitz M.J."/>
            <person name="Selengut J.D."/>
            <person name="Shrivastava S."/>
            <person name="Sullivan S.A."/>
            <person name="Tapia R."/>
            <person name="Thompson L.S."/>
            <person name="Watkins K.L."/>
            <person name="Yang Q."/>
            <person name="Yu C."/>
            <person name="Zafar N."/>
            <person name="Zhou L."/>
            <person name="Kuske C.R."/>
        </authorList>
    </citation>
    <scope>NUCLEOTIDE SEQUENCE [LARGE SCALE GENOMIC DNA]</scope>
    <source>
        <strain>Ellin345</strain>
    </source>
</reference>
<protein>
    <recommendedName>
        <fullName evidence="1">Glycine cleavage system H protein</fullName>
    </recommendedName>
</protein>
<gene>
    <name evidence="1" type="primary">gcvH</name>
    <name type="ordered locus">Acid345_2460</name>
</gene>
<organism>
    <name type="scientific">Koribacter versatilis (strain Ellin345)</name>
    <dbReference type="NCBI Taxonomy" id="204669"/>
    <lineage>
        <taxon>Bacteria</taxon>
        <taxon>Pseudomonadati</taxon>
        <taxon>Acidobacteriota</taxon>
        <taxon>Terriglobia</taxon>
        <taxon>Terriglobales</taxon>
        <taxon>Candidatus Korobacteraceae</taxon>
        <taxon>Candidatus Korobacter</taxon>
    </lineage>
</organism>
<sequence>MAYPADFKYTKEHEWISADGKIGITDHAQSSLGDIVFVELPKVGATITKGQSFGSVESVKAVSDLFAPVSGKVTAVNEELATTPEKVNTDAHAAWMVKVELTNPSELNDLLSAADYEKFAAEEAGH</sequence>
<evidence type="ECO:0000255" key="1">
    <source>
        <dbReference type="HAMAP-Rule" id="MF_00272"/>
    </source>
</evidence>
<evidence type="ECO:0000255" key="2">
    <source>
        <dbReference type="PROSITE-ProRule" id="PRU01066"/>
    </source>
</evidence>
<dbReference type="EMBL" id="CP000360">
    <property type="protein sequence ID" value="ABF41461.1"/>
    <property type="molecule type" value="Genomic_DNA"/>
</dbReference>
<dbReference type="RefSeq" id="WP_011523262.1">
    <property type="nucleotide sequence ID" value="NC_008009.1"/>
</dbReference>
<dbReference type="SMR" id="Q1INT9"/>
<dbReference type="STRING" id="204669.Acid345_2460"/>
<dbReference type="EnsemblBacteria" id="ABF41461">
    <property type="protein sequence ID" value="ABF41461"/>
    <property type="gene ID" value="Acid345_2460"/>
</dbReference>
<dbReference type="KEGG" id="aba:Acid345_2460"/>
<dbReference type="eggNOG" id="COG0509">
    <property type="taxonomic scope" value="Bacteria"/>
</dbReference>
<dbReference type="HOGENOM" id="CLU_097408_2_2_0"/>
<dbReference type="OrthoDB" id="9796712at2"/>
<dbReference type="Proteomes" id="UP000002432">
    <property type="component" value="Chromosome"/>
</dbReference>
<dbReference type="GO" id="GO:0005829">
    <property type="term" value="C:cytosol"/>
    <property type="evidence" value="ECO:0007669"/>
    <property type="project" value="TreeGrafter"/>
</dbReference>
<dbReference type="GO" id="GO:0005960">
    <property type="term" value="C:glycine cleavage complex"/>
    <property type="evidence" value="ECO:0007669"/>
    <property type="project" value="InterPro"/>
</dbReference>
<dbReference type="GO" id="GO:0019464">
    <property type="term" value="P:glycine decarboxylation via glycine cleavage system"/>
    <property type="evidence" value="ECO:0007669"/>
    <property type="project" value="UniProtKB-UniRule"/>
</dbReference>
<dbReference type="CDD" id="cd06848">
    <property type="entry name" value="GCS_H"/>
    <property type="match status" value="1"/>
</dbReference>
<dbReference type="Gene3D" id="2.40.50.100">
    <property type="match status" value="1"/>
</dbReference>
<dbReference type="HAMAP" id="MF_00272">
    <property type="entry name" value="GcvH"/>
    <property type="match status" value="1"/>
</dbReference>
<dbReference type="InterPro" id="IPR003016">
    <property type="entry name" value="2-oxoA_DH_lipoyl-BS"/>
</dbReference>
<dbReference type="InterPro" id="IPR000089">
    <property type="entry name" value="Biotin_lipoyl"/>
</dbReference>
<dbReference type="InterPro" id="IPR002930">
    <property type="entry name" value="GCV_H"/>
</dbReference>
<dbReference type="InterPro" id="IPR033753">
    <property type="entry name" value="GCV_H/Fam206"/>
</dbReference>
<dbReference type="InterPro" id="IPR017453">
    <property type="entry name" value="GCV_H_sub"/>
</dbReference>
<dbReference type="InterPro" id="IPR011053">
    <property type="entry name" value="Single_hybrid_motif"/>
</dbReference>
<dbReference type="NCBIfam" id="TIGR00527">
    <property type="entry name" value="gcvH"/>
    <property type="match status" value="1"/>
</dbReference>
<dbReference type="NCBIfam" id="NF002270">
    <property type="entry name" value="PRK01202.1"/>
    <property type="match status" value="1"/>
</dbReference>
<dbReference type="PANTHER" id="PTHR11715">
    <property type="entry name" value="GLYCINE CLEAVAGE SYSTEM H PROTEIN"/>
    <property type="match status" value="1"/>
</dbReference>
<dbReference type="PANTHER" id="PTHR11715:SF3">
    <property type="entry name" value="GLYCINE CLEAVAGE SYSTEM H PROTEIN-RELATED"/>
    <property type="match status" value="1"/>
</dbReference>
<dbReference type="Pfam" id="PF01597">
    <property type="entry name" value="GCV_H"/>
    <property type="match status" value="1"/>
</dbReference>
<dbReference type="SUPFAM" id="SSF51230">
    <property type="entry name" value="Single hybrid motif"/>
    <property type="match status" value="1"/>
</dbReference>
<dbReference type="PROSITE" id="PS50968">
    <property type="entry name" value="BIOTINYL_LIPOYL"/>
    <property type="match status" value="1"/>
</dbReference>
<dbReference type="PROSITE" id="PS00189">
    <property type="entry name" value="LIPOYL"/>
    <property type="match status" value="1"/>
</dbReference>
<name>GCSH_KORVE</name>
<comment type="function">
    <text evidence="1">The glycine cleavage system catalyzes the degradation of glycine. The H protein shuttles the methylamine group of glycine from the P protein to the T protein.</text>
</comment>
<comment type="cofactor">
    <cofactor evidence="1">
        <name>(R)-lipoate</name>
        <dbReference type="ChEBI" id="CHEBI:83088"/>
    </cofactor>
    <text evidence="1">Binds 1 lipoyl cofactor covalently.</text>
</comment>
<comment type="subunit">
    <text evidence="1">The glycine cleavage system is composed of four proteins: P, T, L and H.</text>
</comment>
<comment type="similarity">
    <text evidence="1">Belongs to the GcvH family.</text>
</comment>